<organism>
    <name type="scientific">Vibrio parahaemolyticus serotype O3:K6 (strain RIMD 2210633)</name>
    <dbReference type="NCBI Taxonomy" id="223926"/>
    <lineage>
        <taxon>Bacteria</taxon>
        <taxon>Pseudomonadati</taxon>
        <taxon>Pseudomonadota</taxon>
        <taxon>Gammaproteobacteria</taxon>
        <taxon>Vibrionales</taxon>
        <taxon>Vibrionaceae</taxon>
        <taxon>Vibrio</taxon>
    </lineage>
</organism>
<reference key="1">
    <citation type="journal article" date="2003" name="Lancet">
        <title>Genome sequence of Vibrio parahaemolyticus: a pathogenic mechanism distinct from that of V. cholerae.</title>
        <authorList>
            <person name="Makino K."/>
            <person name="Oshima K."/>
            <person name="Kurokawa K."/>
            <person name="Yokoyama K."/>
            <person name="Uda T."/>
            <person name="Tagomori K."/>
            <person name="Iijima Y."/>
            <person name="Najima M."/>
            <person name="Nakano M."/>
            <person name="Yamashita A."/>
            <person name="Kubota Y."/>
            <person name="Kimura S."/>
            <person name="Yasunaga T."/>
            <person name="Honda T."/>
            <person name="Shinagawa H."/>
            <person name="Hattori M."/>
            <person name="Iida T."/>
        </authorList>
    </citation>
    <scope>NUCLEOTIDE SEQUENCE [LARGE SCALE GENOMIC DNA]</scope>
    <source>
        <strain>RIMD 2210633</strain>
    </source>
</reference>
<accession>Q87TA9</accession>
<feature type="chain" id="PRO_0000170637" description="Guanylate kinase">
    <location>
        <begin position="1"/>
        <end position="207"/>
    </location>
</feature>
<feature type="domain" description="Guanylate kinase-like" evidence="1">
    <location>
        <begin position="4"/>
        <end position="184"/>
    </location>
</feature>
<feature type="binding site" evidence="1">
    <location>
        <begin position="11"/>
        <end position="18"/>
    </location>
    <ligand>
        <name>ATP</name>
        <dbReference type="ChEBI" id="CHEBI:30616"/>
    </ligand>
</feature>
<proteinExistence type="inferred from homology"/>
<keyword id="KW-0067">ATP-binding</keyword>
<keyword id="KW-0963">Cytoplasm</keyword>
<keyword id="KW-0418">Kinase</keyword>
<keyword id="KW-0547">Nucleotide-binding</keyword>
<keyword id="KW-0808">Transferase</keyword>
<evidence type="ECO:0000255" key="1">
    <source>
        <dbReference type="HAMAP-Rule" id="MF_00328"/>
    </source>
</evidence>
<dbReference type="EC" id="2.7.4.8" evidence="1"/>
<dbReference type="EMBL" id="BA000031">
    <property type="protein sequence ID" value="BAC58424.1"/>
    <property type="molecule type" value="Genomic_DNA"/>
</dbReference>
<dbReference type="RefSeq" id="NP_796540.1">
    <property type="nucleotide sequence ID" value="NC_004603.1"/>
</dbReference>
<dbReference type="RefSeq" id="WP_005458969.1">
    <property type="nucleotide sequence ID" value="NC_004603.1"/>
</dbReference>
<dbReference type="SMR" id="Q87TA9"/>
<dbReference type="GeneID" id="1187628"/>
<dbReference type="KEGG" id="vpa:VP0161"/>
<dbReference type="PATRIC" id="fig|223926.6.peg.154"/>
<dbReference type="eggNOG" id="COG0194">
    <property type="taxonomic scope" value="Bacteria"/>
</dbReference>
<dbReference type="HOGENOM" id="CLU_001715_1_0_6"/>
<dbReference type="Proteomes" id="UP000002493">
    <property type="component" value="Chromosome 1"/>
</dbReference>
<dbReference type="GO" id="GO:0005829">
    <property type="term" value="C:cytosol"/>
    <property type="evidence" value="ECO:0007669"/>
    <property type="project" value="TreeGrafter"/>
</dbReference>
<dbReference type="GO" id="GO:0005524">
    <property type="term" value="F:ATP binding"/>
    <property type="evidence" value="ECO:0007669"/>
    <property type="project" value="UniProtKB-UniRule"/>
</dbReference>
<dbReference type="GO" id="GO:0004385">
    <property type="term" value="F:guanylate kinase activity"/>
    <property type="evidence" value="ECO:0007669"/>
    <property type="project" value="UniProtKB-UniRule"/>
</dbReference>
<dbReference type="CDD" id="cd00071">
    <property type="entry name" value="GMPK"/>
    <property type="match status" value="1"/>
</dbReference>
<dbReference type="FunFam" id="3.40.50.300:FF:000855">
    <property type="entry name" value="Guanylate kinase"/>
    <property type="match status" value="1"/>
</dbReference>
<dbReference type="FunFam" id="3.30.63.10:FF:000002">
    <property type="entry name" value="Guanylate kinase 1"/>
    <property type="match status" value="1"/>
</dbReference>
<dbReference type="Gene3D" id="3.30.63.10">
    <property type="entry name" value="Guanylate Kinase phosphate binding domain"/>
    <property type="match status" value="1"/>
</dbReference>
<dbReference type="Gene3D" id="3.40.50.300">
    <property type="entry name" value="P-loop containing nucleotide triphosphate hydrolases"/>
    <property type="match status" value="1"/>
</dbReference>
<dbReference type="HAMAP" id="MF_00328">
    <property type="entry name" value="Guanylate_kinase"/>
    <property type="match status" value="1"/>
</dbReference>
<dbReference type="InterPro" id="IPR008145">
    <property type="entry name" value="GK/Ca_channel_bsu"/>
</dbReference>
<dbReference type="InterPro" id="IPR008144">
    <property type="entry name" value="Guanylate_kin-like_dom"/>
</dbReference>
<dbReference type="InterPro" id="IPR017665">
    <property type="entry name" value="Guanylate_kinase"/>
</dbReference>
<dbReference type="InterPro" id="IPR020590">
    <property type="entry name" value="Guanylate_kinase_CS"/>
</dbReference>
<dbReference type="InterPro" id="IPR027417">
    <property type="entry name" value="P-loop_NTPase"/>
</dbReference>
<dbReference type="NCBIfam" id="TIGR03263">
    <property type="entry name" value="guanyl_kin"/>
    <property type="match status" value="1"/>
</dbReference>
<dbReference type="PANTHER" id="PTHR23117:SF13">
    <property type="entry name" value="GUANYLATE KINASE"/>
    <property type="match status" value="1"/>
</dbReference>
<dbReference type="PANTHER" id="PTHR23117">
    <property type="entry name" value="GUANYLATE KINASE-RELATED"/>
    <property type="match status" value="1"/>
</dbReference>
<dbReference type="Pfam" id="PF00625">
    <property type="entry name" value="Guanylate_kin"/>
    <property type="match status" value="1"/>
</dbReference>
<dbReference type="SMART" id="SM00072">
    <property type="entry name" value="GuKc"/>
    <property type="match status" value="1"/>
</dbReference>
<dbReference type="SUPFAM" id="SSF52540">
    <property type="entry name" value="P-loop containing nucleoside triphosphate hydrolases"/>
    <property type="match status" value="1"/>
</dbReference>
<dbReference type="PROSITE" id="PS00856">
    <property type="entry name" value="GUANYLATE_KINASE_1"/>
    <property type="match status" value="1"/>
</dbReference>
<dbReference type="PROSITE" id="PS50052">
    <property type="entry name" value="GUANYLATE_KINASE_2"/>
    <property type="match status" value="1"/>
</dbReference>
<sequence length="207" mass="23446">MGKGTLYIVSAPSGAGKSSLISAMLERNPTYAMKVSVSHTTRNMRPGEEDGVHYHFVAKEEFETLIAKGDFLEYAEVFGNYYGTSRVWIEETLEKGIDVFLDIDWQGARQIREQMPKAKSIFILPPSNGELERRLNTRGQDSAEVIAKRMAEAKSEISHYSEYDYVIVNDDFDTALMDFKAILRAERLKEEKQAAKYKGMLDALLAE</sequence>
<name>KGUA_VIBPA</name>
<protein>
    <recommendedName>
        <fullName evidence="1">Guanylate kinase</fullName>
        <ecNumber evidence="1">2.7.4.8</ecNumber>
    </recommendedName>
    <alternativeName>
        <fullName evidence="1">GMP kinase</fullName>
    </alternativeName>
</protein>
<comment type="function">
    <text evidence="1">Essential for recycling GMP and indirectly, cGMP.</text>
</comment>
<comment type="catalytic activity">
    <reaction evidence="1">
        <text>GMP + ATP = GDP + ADP</text>
        <dbReference type="Rhea" id="RHEA:20780"/>
        <dbReference type="ChEBI" id="CHEBI:30616"/>
        <dbReference type="ChEBI" id="CHEBI:58115"/>
        <dbReference type="ChEBI" id="CHEBI:58189"/>
        <dbReference type="ChEBI" id="CHEBI:456216"/>
        <dbReference type="EC" id="2.7.4.8"/>
    </reaction>
</comment>
<comment type="subcellular location">
    <subcellularLocation>
        <location evidence="1">Cytoplasm</location>
    </subcellularLocation>
</comment>
<comment type="similarity">
    <text evidence="1">Belongs to the guanylate kinase family.</text>
</comment>
<gene>
    <name evidence="1" type="primary">gmk</name>
    <name type="ordered locus">VP0161</name>
</gene>